<sequence length="250" mass="27393">MSTRAEVCAVACAELFRDAGEIMISPMTNMASVGARLARLTFAPDILLTDGEAQLLADTPALGKTGAPNRIEGWMPFGRVFETLAWGRRHVVMGANQVDRYGNQNISAFGPLQRPTRQMFGVRGSPGNTINHATSYWVGNHCKRVFVEAVDVVSGIGYDKVDPDNPAFRFVNVYRVVSNLGVFDFGGPDHSMRAVSLHPGVTPGDVRDATSFEVHDLDAAEQTRLPTDDELHLIRAVIDPKSLRDREIRS</sequence>
<dbReference type="EC" id="4.1.99.-" evidence="2"/>
<dbReference type="EMBL" id="AL123456">
    <property type="protein sequence ID" value="CCP46374.1"/>
    <property type="molecule type" value="Genomic_DNA"/>
</dbReference>
<dbReference type="PIR" id="A70678">
    <property type="entry name" value="A70678"/>
</dbReference>
<dbReference type="RefSeq" id="NP_218069.1">
    <property type="nucleotide sequence ID" value="NC_000962.3"/>
</dbReference>
<dbReference type="RefSeq" id="WP_003419321.1">
    <property type="nucleotide sequence ID" value="NZ_NVQJ01000014.1"/>
</dbReference>
<dbReference type="PDB" id="6CON">
    <property type="method" value="X-ray"/>
    <property type="resolution" value="2.10 A"/>
    <property type="chains" value="B/D/F/H=1-250"/>
</dbReference>
<dbReference type="PDBsum" id="6CON"/>
<dbReference type="SMR" id="P9WPV9"/>
<dbReference type="STRING" id="83332.Rv3552"/>
<dbReference type="PaxDb" id="83332-Rv3552"/>
<dbReference type="DNASU" id="887453"/>
<dbReference type="GeneID" id="45427536"/>
<dbReference type="GeneID" id="887453"/>
<dbReference type="KEGG" id="mtu:Rv3552"/>
<dbReference type="KEGG" id="mtv:RVBD_3552"/>
<dbReference type="TubercuList" id="Rv3552"/>
<dbReference type="eggNOG" id="COG2057">
    <property type="taxonomic scope" value="Bacteria"/>
</dbReference>
<dbReference type="InParanoid" id="P9WPV9"/>
<dbReference type="OrthoDB" id="9813111at2"/>
<dbReference type="PhylomeDB" id="P9WPV9"/>
<dbReference type="BioCyc" id="MetaCyc:G185E-7829-MONOMER"/>
<dbReference type="UniPathway" id="UPA01058"/>
<dbReference type="Proteomes" id="UP000001584">
    <property type="component" value="Chromosome"/>
</dbReference>
<dbReference type="GO" id="GO:0008410">
    <property type="term" value="F:CoA-transferase activity"/>
    <property type="evidence" value="ECO:0007669"/>
    <property type="project" value="InterPro"/>
</dbReference>
<dbReference type="GO" id="GO:0016829">
    <property type="term" value="F:lyase activity"/>
    <property type="evidence" value="ECO:0007669"/>
    <property type="project" value="UniProtKB-KW"/>
</dbReference>
<dbReference type="GO" id="GO:0051701">
    <property type="term" value="P:biological process involved in interaction with host"/>
    <property type="evidence" value="ECO:0000315"/>
    <property type="project" value="MTBBASE"/>
</dbReference>
<dbReference type="GO" id="GO:0006707">
    <property type="term" value="P:cholesterol catabolic process"/>
    <property type="evidence" value="ECO:0007669"/>
    <property type="project" value="UniProtKB-UniPathway"/>
</dbReference>
<dbReference type="Gene3D" id="3.40.1080.10">
    <property type="entry name" value="Glutaconate Coenzyme A-transferase"/>
    <property type="match status" value="1"/>
</dbReference>
<dbReference type="InterPro" id="IPR004165">
    <property type="entry name" value="CoA_trans_fam_I"/>
</dbReference>
<dbReference type="InterPro" id="IPR037171">
    <property type="entry name" value="NagB/RpiA_transferase-like"/>
</dbReference>
<dbReference type="PANTHER" id="PTHR43293">
    <property type="entry name" value="ACETATE COA-TRANSFERASE YDIF"/>
    <property type="match status" value="1"/>
</dbReference>
<dbReference type="PANTHER" id="PTHR43293:SF3">
    <property type="entry name" value="CHOLESTEROL RING-CLEAVING HYDROLASE IPDB SUBUNIT"/>
    <property type="match status" value="1"/>
</dbReference>
<dbReference type="SMART" id="SM00882">
    <property type="entry name" value="CoA_trans"/>
    <property type="match status" value="1"/>
</dbReference>
<dbReference type="SUPFAM" id="SSF100950">
    <property type="entry name" value="NagB/RpiA/CoA transferase-like"/>
    <property type="match status" value="1"/>
</dbReference>
<reference key="1">
    <citation type="journal article" date="1998" name="Nature">
        <title>Deciphering the biology of Mycobacterium tuberculosis from the complete genome sequence.</title>
        <authorList>
            <person name="Cole S.T."/>
            <person name="Brosch R."/>
            <person name="Parkhill J."/>
            <person name="Garnier T."/>
            <person name="Churcher C.M."/>
            <person name="Harris D.E."/>
            <person name="Gordon S.V."/>
            <person name="Eiglmeier K."/>
            <person name="Gas S."/>
            <person name="Barry C.E. III"/>
            <person name="Tekaia F."/>
            <person name="Badcock K."/>
            <person name="Basham D."/>
            <person name="Brown D."/>
            <person name="Chillingworth T."/>
            <person name="Connor R."/>
            <person name="Davies R.M."/>
            <person name="Devlin K."/>
            <person name="Feltwell T."/>
            <person name="Gentles S."/>
            <person name="Hamlin N."/>
            <person name="Holroyd S."/>
            <person name="Hornsby T."/>
            <person name="Jagels K."/>
            <person name="Krogh A."/>
            <person name="McLean J."/>
            <person name="Moule S."/>
            <person name="Murphy L.D."/>
            <person name="Oliver S."/>
            <person name="Osborne J."/>
            <person name="Quail M.A."/>
            <person name="Rajandream M.A."/>
            <person name="Rogers J."/>
            <person name="Rutter S."/>
            <person name="Seeger K."/>
            <person name="Skelton S."/>
            <person name="Squares S."/>
            <person name="Squares R."/>
            <person name="Sulston J.E."/>
            <person name="Taylor K."/>
            <person name="Whitehead S."/>
            <person name="Barrell B.G."/>
        </authorList>
    </citation>
    <scope>NUCLEOTIDE SEQUENCE [LARGE SCALE GENOMIC DNA]</scope>
    <source>
        <strain>ATCC 25618 / H37Rv</strain>
    </source>
</reference>
<reference key="2">
    <citation type="journal article" date="2011" name="Mol. Cell. Proteomics">
        <title>Proteogenomic analysis of Mycobacterium tuberculosis by high resolution mass spectrometry.</title>
        <authorList>
            <person name="Kelkar D.S."/>
            <person name="Kumar D."/>
            <person name="Kumar P."/>
            <person name="Balakrishnan L."/>
            <person name="Muthusamy B."/>
            <person name="Yadav A.K."/>
            <person name="Shrivastava P."/>
            <person name="Marimuthu A."/>
            <person name="Anand S."/>
            <person name="Sundaram H."/>
            <person name="Kingsbury R."/>
            <person name="Harsha H.C."/>
            <person name="Nair B."/>
            <person name="Prasad T.S."/>
            <person name="Chauhan D.S."/>
            <person name="Katoch K."/>
            <person name="Katoch V.M."/>
            <person name="Kumar P."/>
            <person name="Chaerkady R."/>
            <person name="Ramachandran S."/>
            <person name="Dash D."/>
            <person name="Pandey A."/>
        </authorList>
    </citation>
    <scope>IDENTIFICATION BY MASS SPECTROMETRY [LARGE SCALE ANALYSIS]</scope>
    <source>
        <strain>ATCC 25618 / H37Rv</strain>
    </source>
</reference>
<reference key="3">
    <citation type="journal article" date="2017" name="MBio">
        <title>Catabolism of the last two steroid rings in Mycobacterium tuberculosis and other bacteria.</title>
        <authorList>
            <person name="Crowe A.M."/>
            <person name="Casabon I."/>
            <person name="Brown K.L."/>
            <person name="Liu J."/>
            <person name="Lian J."/>
            <person name="Rogalski J.C."/>
            <person name="Hurst T.E."/>
            <person name="Snieckus V."/>
            <person name="Foster L.J."/>
            <person name="Eltis L.D."/>
        </authorList>
    </citation>
    <scope>FUNCTION</scope>
    <scope>PATHWAY</scope>
    <scope>DISRUPTION PHENOTYPE</scope>
    <source>
        <strain>Erdman</strain>
    </source>
</reference>
<reference evidence="5" key="4">
    <citation type="journal article" date="2018" name="Proc. Natl. Acad. Sci. U.S.A.">
        <title>IpdAB, a virulence factor in Mycobacterium tuberculosis, is a cholesterol ring-cleaving hydrolase.</title>
        <authorList>
            <person name="Crowe A.M."/>
            <person name="Workman S.D."/>
            <person name="Watanabe N."/>
            <person name="Worrall L.J."/>
            <person name="Strynadka N.C.J."/>
            <person name="Eltis L.D."/>
        </authorList>
    </citation>
    <scope>X-RAY CRYSTALLOGRAPHY (2.10 ANGSTROMS) IN COMPLEX WITH IPDA</scope>
    <scope>FUNCTION</scope>
    <scope>CATALYTIC ACTIVITY</scope>
    <scope>SUBUNIT</scope>
</reference>
<feature type="chain" id="PRO_0000157931" description="Cholesterol ring-cleaving hydrolase IpdB subunit">
    <location>
        <begin position="1"/>
        <end position="250"/>
    </location>
</feature>
<feature type="helix" evidence="6">
    <location>
        <begin position="4"/>
        <end position="14"/>
    </location>
</feature>
<feature type="turn" evidence="6">
    <location>
        <begin position="15"/>
        <end position="18"/>
    </location>
</feature>
<feature type="strand" evidence="6">
    <location>
        <begin position="23"/>
        <end position="26"/>
    </location>
</feature>
<feature type="helix" evidence="6">
    <location>
        <begin position="29"/>
        <end position="40"/>
    </location>
</feature>
<feature type="strand" evidence="6">
    <location>
        <begin position="51"/>
        <end position="58"/>
    </location>
</feature>
<feature type="strand" evidence="6">
    <location>
        <begin position="71"/>
        <end position="74"/>
    </location>
</feature>
<feature type="helix" evidence="6">
    <location>
        <begin position="77"/>
        <end position="86"/>
    </location>
</feature>
<feature type="strand" evidence="6">
    <location>
        <begin position="89"/>
        <end position="93"/>
    </location>
</feature>
<feature type="strand" evidence="6">
    <location>
        <begin position="96"/>
        <end position="99"/>
    </location>
</feature>
<feature type="strand" evidence="6">
    <location>
        <begin position="107"/>
        <end position="110"/>
    </location>
</feature>
<feature type="strand" evidence="6">
    <location>
        <begin position="116"/>
        <end position="118"/>
    </location>
</feature>
<feature type="helix" evidence="6">
    <location>
        <begin position="125"/>
        <end position="131"/>
    </location>
</feature>
<feature type="strand" evidence="6">
    <location>
        <begin position="132"/>
        <end position="140"/>
    </location>
</feature>
<feature type="turn" evidence="6">
    <location>
        <begin position="143"/>
        <end position="145"/>
    </location>
</feature>
<feature type="strand" evidence="6">
    <location>
        <begin position="146"/>
        <end position="149"/>
    </location>
</feature>
<feature type="helix" evidence="6">
    <location>
        <begin position="158"/>
        <end position="160"/>
    </location>
</feature>
<feature type="helix" evidence="6">
    <location>
        <begin position="166"/>
        <end position="168"/>
    </location>
</feature>
<feature type="strand" evidence="6">
    <location>
        <begin position="173"/>
        <end position="185"/>
    </location>
</feature>
<feature type="helix" evidence="6">
    <location>
        <begin position="188"/>
        <end position="190"/>
    </location>
</feature>
<feature type="strand" evidence="6">
    <location>
        <begin position="193"/>
        <end position="197"/>
    </location>
</feature>
<feature type="helix" evidence="6">
    <location>
        <begin position="203"/>
        <end position="208"/>
    </location>
</feature>
<feature type="helix" evidence="6">
    <location>
        <begin position="228"/>
        <end position="236"/>
    </location>
</feature>
<feature type="helix" evidence="6">
    <location>
        <begin position="243"/>
        <end position="247"/>
    </location>
</feature>
<protein>
    <recommendedName>
        <fullName evidence="4">Cholesterol ring-cleaving hydrolase IpdB subunit</fullName>
        <ecNumber evidence="2">4.1.99.-</ecNumber>
    </recommendedName>
    <alternativeName>
        <fullName evidence="4">(3E)-2-(2-carboxylatoethyl)-3-methyl-6-oxocyclohex-1-ene-1-carboxyl-CoA hydrolase beta subunit</fullName>
        <shortName evidence="4">COCHEA-CoA hydrolase beta subunit</shortName>
    </alternativeName>
</protein>
<organism>
    <name type="scientific">Mycobacterium tuberculosis (strain ATCC 25618 / H37Rv)</name>
    <dbReference type="NCBI Taxonomy" id="83332"/>
    <lineage>
        <taxon>Bacteria</taxon>
        <taxon>Bacillati</taxon>
        <taxon>Actinomycetota</taxon>
        <taxon>Actinomycetes</taxon>
        <taxon>Mycobacteriales</taxon>
        <taxon>Mycobacteriaceae</taxon>
        <taxon>Mycobacterium</taxon>
        <taxon>Mycobacterium tuberculosis complex</taxon>
    </lineage>
</organism>
<evidence type="ECO:0000269" key="1">
    <source>
    </source>
</evidence>
<evidence type="ECO:0000269" key="2">
    <source>
    </source>
</evidence>
<evidence type="ECO:0000303" key="3">
    <source>
    </source>
</evidence>
<evidence type="ECO:0000305" key="4"/>
<evidence type="ECO:0007744" key="5">
    <source>
        <dbReference type="PDB" id="6CON"/>
    </source>
</evidence>
<evidence type="ECO:0007829" key="6">
    <source>
        <dbReference type="PDB" id="6CON"/>
    </source>
</evidence>
<name>IPDB_MYCTU</name>
<keyword id="KW-0002">3D-structure</keyword>
<keyword id="KW-0153">Cholesterol metabolism</keyword>
<keyword id="KW-0443">Lipid metabolism</keyword>
<keyword id="KW-0456">Lyase</keyword>
<keyword id="KW-1185">Reference proteome</keyword>
<keyword id="KW-0753">Steroid metabolism</keyword>
<keyword id="KW-1207">Sterol metabolism</keyword>
<gene>
    <name evidence="3" type="primary">ipdB</name>
    <name type="ordered locus">Rv3552</name>
    <name type="ORF">MTCY03C7.03c</name>
</gene>
<comment type="function">
    <text evidence="1 2">Involved in the final steps of cholesterol and steroid degradation (PubMed:28377529). Opens the last steroid ring of cholesterol by catalyzing the hydrolysis of (3E)-2-(2-carboxylatoethyl)-3-methyl-6-oxocyclohex-1-ene-1-carboxyl-CoA (COCHEA-CoA) to 6-methyl-3,7-dioxodecanedioyl-CoA (MeDODA-CoA) (PubMed:29581275).</text>
</comment>
<comment type="catalytic activity">
    <reaction evidence="2">
        <text>(3E)-2-(2-carboxylatoethyl)-3-methyl-6-oxocyclohex-1-ene-1-carboxyl-CoA + H2O = 6-methyl-3,7-dioxodecanedioyl-CoA</text>
        <dbReference type="Rhea" id="RHEA:66364"/>
        <dbReference type="ChEBI" id="CHEBI:15377"/>
        <dbReference type="ChEBI" id="CHEBI:167101"/>
        <dbReference type="ChEBI" id="CHEBI:167102"/>
    </reaction>
    <physiologicalReaction direction="left-to-right" evidence="2">
        <dbReference type="Rhea" id="RHEA:66365"/>
    </physiologicalReaction>
</comment>
<comment type="pathway">
    <text evidence="1">Steroid metabolism; cholesterol degradation.</text>
</comment>
<comment type="subunit">
    <text evidence="2">Heterotetramer composed of 2 IpdA subunits and 2 IpdB subunits.</text>
</comment>
<comment type="disruption phenotype">
    <text evidence="1">IpdAB double deletion mutant does not grow on cholesterol, but grows as the wild-type on glycerol. In the presence of cholesterol, ipdAB double deletion mutant accumulates COCHEA-CoA. Double mutant does not survive in macrophages and displays severely depleted CoASH levels that correlate with a cholesterol-dependent toxicity.</text>
</comment>
<comment type="similarity">
    <text evidence="4">Belongs to the 3-oxoacid CoA-transferase subunit B family.</text>
</comment>
<proteinExistence type="evidence at protein level"/>
<accession>P9WPV9</accession>
<accession>L0TD49</accession>
<accession>P63652</accession>
<accession>P71848</accession>